<keyword id="KW-1003">Cell membrane</keyword>
<keyword id="KW-0325">Glycoprotein</keyword>
<keyword id="KW-0336">GPI-anchor</keyword>
<keyword id="KW-0449">Lipoprotein</keyword>
<keyword id="KW-0472">Membrane</keyword>
<keyword id="KW-1185">Reference proteome</keyword>
<keyword id="KW-0732">Signal</keyword>
<reference key="1">
    <citation type="journal article" date="2002" name="Nature">
        <title>Sequence and analysis of chromosome 2 of Dictyostelium discoideum.</title>
        <authorList>
            <person name="Gloeckner G."/>
            <person name="Eichinger L."/>
            <person name="Szafranski K."/>
            <person name="Pachebat J.A."/>
            <person name="Bankier A.T."/>
            <person name="Dear P.H."/>
            <person name="Lehmann R."/>
            <person name="Baumgart C."/>
            <person name="Parra G."/>
            <person name="Abril J.F."/>
            <person name="Guigo R."/>
            <person name="Kumpf K."/>
            <person name="Tunggal B."/>
            <person name="Cox E.C."/>
            <person name="Quail M.A."/>
            <person name="Platzer M."/>
            <person name="Rosenthal A."/>
            <person name="Noegel A.A."/>
        </authorList>
    </citation>
    <scope>NUCLEOTIDE SEQUENCE [LARGE SCALE GENOMIC DNA]</scope>
    <source>
        <strain>AX4</strain>
    </source>
</reference>
<reference key="2">
    <citation type="journal article" date="2005" name="Nature">
        <title>The genome of the social amoeba Dictyostelium discoideum.</title>
        <authorList>
            <person name="Eichinger L."/>
            <person name="Pachebat J.A."/>
            <person name="Gloeckner G."/>
            <person name="Rajandream M.A."/>
            <person name="Sucgang R."/>
            <person name="Berriman M."/>
            <person name="Song J."/>
            <person name="Olsen R."/>
            <person name="Szafranski K."/>
            <person name="Xu Q."/>
            <person name="Tunggal B."/>
            <person name="Kummerfeld S."/>
            <person name="Madera M."/>
            <person name="Konfortov B.A."/>
            <person name="Rivero F."/>
            <person name="Bankier A.T."/>
            <person name="Lehmann R."/>
            <person name="Hamlin N."/>
            <person name="Davies R."/>
            <person name="Gaudet P."/>
            <person name="Fey P."/>
            <person name="Pilcher K."/>
            <person name="Chen G."/>
            <person name="Saunders D."/>
            <person name="Sodergren E.J."/>
            <person name="Davis P."/>
            <person name="Kerhornou A."/>
            <person name="Nie X."/>
            <person name="Hall N."/>
            <person name="Anjard C."/>
            <person name="Hemphill L."/>
            <person name="Bason N."/>
            <person name="Farbrother P."/>
            <person name="Desany B."/>
            <person name="Just E."/>
            <person name="Morio T."/>
            <person name="Rost R."/>
            <person name="Churcher C.M."/>
            <person name="Cooper J."/>
            <person name="Haydock S."/>
            <person name="van Driessche N."/>
            <person name="Cronin A."/>
            <person name="Goodhead I."/>
            <person name="Muzny D.M."/>
            <person name="Mourier T."/>
            <person name="Pain A."/>
            <person name="Lu M."/>
            <person name="Harper D."/>
            <person name="Lindsay R."/>
            <person name="Hauser H."/>
            <person name="James K.D."/>
            <person name="Quiles M."/>
            <person name="Madan Babu M."/>
            <person name="Saito T."/>
            <person name="Buchrieser C."/>
            <person name="Wardroper A."/>
            <person name="Felder M."/>
            <person name="Thangavelu M."/>
            <person name="Johnson D."/>
            <person name="Knights A."/>
            <person name="Loulseged H."/>
            <person name="Mungall K.L."/>
            <person name="Oliver K."/>
            <person name="Price C."/>
            <person name="Quail M.A."/>
            <person name="Urushihara H."/>
            <person name="Hernandez J."/>
            <person name="Rabbinowitsch E."/>
            <person name="Steffen D."/>
            <person name="Sanders M."/>
            <person name="Ma J."/>
            <person name="Kohara Y."/>
            <person name="Sharp S."/>
            <person name="Simmonds M.N."/>
            <person name="Spiegler S."/>
            <person name="Tivey A."/>
            <person name="Sugano S."/>
            <person name="White B."/>
            <person name="Walker D."/>
            <person name="Woodward J.R."/>
            <person name="Winckler T."/>
            <person name="Tanaka Y."/>
            <person name="Shaulsky G."/>
            <person name="Schleicher M."/>
            <person name="Weinstock G.M."/>
            <person name="Rosenthal A."/>
            <person name="Cox E.C."/>
            <person name="Chisholm R.L."/>
            <person name="Gibbs R.A."/>
            <person name="Loomis W.F."/>
            <person name="Platzer M."/>
            <person name="Kay R.R."/>
            <person name="Williams J.G."/>
            <person name="Dear P.H."/>
            <person name="Noegel A.A."/>
            <person name="Barrell B.G."/>
            <person name="Kuspa A."/>
        </authorList>
    </citation>
    <scope>NUCLEOTIDE SEQUENCE [LARGE SCALE GENOMIC DNA]</scope>
    <source>
        <strain>AX4</strain>
    </source>
</reference>
<sequence>MRIIFYLTLLLFIFNKVKSDNCTIGGLTATSCNETSQQYYFTQDKFTSEDIIQIPFGAKLYFSGDVVFNYPVNFNCQPSLKKELSRFVYEIDCLQVFSNGTITYNAEEIYCSVDFSTVFDIDTMVDKPVDMVESWSRFMKPTKGFGETKVYEPVVYSRIKAQAGYKCDFNPGFRTSRRVPDKYALHSKCAWAKALFPAGDFNIRITPCNLQNNSESVRKLEEIGFDKNFYMEKLDFTPTDGLFYNGNRESIYIRYYPNFEKKFDLSSIQDIFDSYLYIINYCEDNPNKFEISFGMQSDLWDHRAFNLTDFQLVKNVNGTFEGSATRNQISIMVLILSVLLVLIL</sequence>
<organism>
    <name type="scientific">Dictyostelium discoideum</name>
    <name type="common">Social amoeba</name>
    <dbReference type="NCBI Taxonomy" id="44689"/>
    <lineage>
        <taxon>Eukaryota</taxon>
        <taxon>Amoebozoa</taxon>
        <taxon>Evosea</taxon>
        <taxon>Eumycetozoa</taxon>
        <taxon>Dictyostelia</taxon>
        <taxon>Dictyosteliales</taxon>
        <taxon>Dictyosteliaceae</taxon>
        <taxon>Dictyostelium</taxon>
    </lineage>
</organism>
<evidence type="ECO:0000255" key="1"/>
<evidence type="ECO:0000305" key="2"/>
<proteinExistence type="inferred from homology"/>
<accession>Q553T1</accession>
<comment type="subcellular location">
    <subcellularLocation>
        <location evidence="2">Cell membrane</location>
        <topology evidence="2">Lipid-anchor</topology>
        <topology evidence="2">GPI-anchor</topology>
    </subcellularLocation>
</comment>
<dbReference type="EMBL" id="AAFI02000013">
    <property type="protein sequence ID" value="EAL69771.1"/>
    <property type="molecule type" value="Genomic_DNA"/>
</dbReference>
<dbReference type="RefSeq" id="XP_643684.1">
    <property type="nucleotide sequence ID" value="XM_638592.1"/>
</dbReference>
<dbReference type="FunCoup" id="Q553T1">
    <property type="interactions" value="252"/>
</dbReference>
<dbReference type="PaxDb" id="44689-DDB0230006"/>
<dbReference type="EnsemblProtists" id="EAL69771">
    <property type="protein sequence ID" value="EAL69771"/>
    <property type="gene ID" value="DDB_G0275411"/>
</dbReference>
<dbReference type="GeneID" id="8619951"/>
<dbReference type="KEGG" id="ddi:DDB_G0275411"/>
<dbReference type="dictyBase" id="DDB_G0275411"/>
<dbReference type="VEuPathDB" id="AmoebaDB:DDB_G0275411"/>
<dbReference type="eggNOG" id="ENOG502RD5P">
    <property type="taxonomic scope" value="Eukaryota"/>
</dbReference>
<dbReference type="HOGENOM" id="CLU_807588_0_0_1"/>
<dbReference type="InParanoid" id="Q553T1"/>
<dbReference type="OMA" id="YIINYCE"/>
<dbReference type="PRO" id="PR:Q553T1"/>
<dbReference type="Proteomes" id="UP000002195">
    <property type="component" value="Chromosome 2"/>
</dbReference>
<dbReference type="GO" id="GO:0005886">
    <property type="term" value="C:plasma membrane"/>
    <property type="evidence" value="ECO:0007669"/>
    <property type="project" value="UniProtKB-SubCell"/>
</dbReference>
<dbReference type="GO" id="GO:0098552">
    <property type="term" value="C:side of membrane"/>
    <property type="evidence" value="ECO:0007669"/>
    <property type="project" value="UniProtKB-KW"/>
</dbReference>
<gene>
    <name type="ORF">DDB_G0275411</name>
</gene>
<feature type="signal peptide" evidence="1">
    <location>
        <begin position="1"/>
        <end position="19"/>
    </location>
</feature>
<feature type="chain" id="PRO_0000367263" description="putative uncharacterized GPI-anchored protein DDB_G0275411">
    <location>
        <begin position="20"/>
        <end position="322"/>
    </location>
</feature>
<feature type="propeptide" id="PRO_0000367264" description="Removed in mature form" evidence="1">
    <location>
        <begin position="323"/>
        <end position="344"/>
    </location>
</feature>
<protein>
    <recommendedName>
        <fullName>putative uncharacterized GPI-anchored protein DDB_G0275411</fullName>
    </recommendedName>
</protein>
<name>Y5411_DICDI</name>